<sequence length="96" mass="11255">MHVTLVEINVHEDKVDEFIEVFRQNHLGSVQEEGNLRFDVLQDPEVNSRFYIYEAYKDEDAVAFHKTTPHYKTCVAKLESLMTGPRKKRLFNGLMP</sequence>
<accession>B1IRU2</accession>
<evidence type="ECO:0000255" key="1">
    <source>
        <dbReference type="HAMAP-Rule" id="MF_02051"/>
    </source>
</evidence>
<feature type="chain" id="PRO_0000351563" description="(4S)-4-hydroxy-5-phosphonooxypentane-2,3-dione isomerase">
    <location>
        <begin position="1"/>
        <end position="96"/>
    </location>
</feature>
<feature type="domain" description="ABM" evidence="1">
    <location>
        <begin position="2"/>
        <end position="91"/>
    </location>
</feature>
<gene>
    <name evidence="1" type="primary">lsrG</name>
    <name type="ordered locus">EcolC_2140</name>
</gene>
<reference key="1">
    <citation type="submission" date="2008-02" db="EMBL/GenBank/DDBJ databases">
        <title>Complete sequence of Escherichia coli C str. ATCC 8739.</title>
        <authorList>
            <person name="Copeland A."/>
            <person name="Lucas S."/>
            <person name="Lapidus A."/>
            <person name="Glavina del Rio T."/>
            <person name="Dalin E."/>
            <person name="Tice H."/>
            <person name="Bruce D."/>
            <person name="Goodwin L."/>
            <person name="Pitluck S."/>
            <person name="Kiss H."/>
            <person name="Brettin T."/>
            <person name="Detter J.C."/>
            <person name="Han C."/>
            <person name="Kuske C.R."/>
            <person name="Schmutz J."/>
            <person name="Larimer F."/>
            <person name="Land M."/>
            <person name="Hauser L."/>
            <person name="Kyrpides N."/>
            <person name="Mikhailova N."/>
            <person name="Ingram L."/>
            <person name="Richardson P."/>
        </authorList>
    </citation>
    <scope>NUCLEOTIDE SEQUENCE [LARGE SCALE GENOMIC DNA]</scope>
    <source>
        <strain>ATCC 8739 / DSM 1576 / NBRC 3972 / NCIMB 8545 / WDCM 00012 / Crooks</strain>
    </source>
</reference>
<keyword id="KW-0963">Cytoplasm</keyword>
<keyword id="KW-0413">Isomerase</keyword>
<comment type="function">
    <text evidence="1">Involved in the degradation of phospho-AI-2, thereby terminating induction of the lsr operon and closing the AI-2 signaling cycle. Catalyzes the conversion of (4S)-4-hydroxy-5-phosphonooxypentane-2,3-dione (P-DPD) to 3-hydroxy-5-phosphonooxypentane-2,4-dione (P-HPD).</text>
</comment>
<comment type="catalytic activity">
    <reaction evidence="1">
        <text>(2S)-2-hydroxy-3,4-dioxopentyl phosphate = 3-hydroxy-2,4-dioxopentyl phosphate</text>
        <dbReference type="Rhea" id="RHEA:44360"/>
        <dbReference type="ChEBI" id="CHEBI:71677"/>
        <dbReference type="ChEBI" id="CHEBI:84359"/>
        <dbReference type="EC" id="5.3.1.32"/>
    </reaction>
</comment>
<comment type="subunit">
    <text evidence="1">Homodimer.</text>
</comment>
<comment type="subcellular location">
    <subcellularLocation>
        <location evidence="1">Cytoplasm</location>
    </subcellularLocation>
</comment>
<comment type="similarity">
    <text evidence="1">Belongs to the LsrG family.</text>
</comment>
<organism>
    <name type="scientific">Escherichia coli (strain ATCC 8739 / DSM 1576 / NBRC 3972 / NCIMB 8545 / WDCM 00012 / Crooks)</name>
    <dbReference type="NCBI Taxonomy" id="481805"/>
    <lineage>
        <taxon>Bacteria</taxon>
        <taxon>Pseudomonadati</taxon>
        <taxon>Pseudomonadota</taxon>
        <taxon>Gammaproteobacteria</taxon>
        <taxon>Enterobacterales</taxon>
        <taxon>Enterobacteriaceae</taxon>
        <taxon>Escherichia</taxon>
    </lineage>
</organism>
<dbReference type="EC" id="5.3.1.32" evidence="1"/>
<dbReference type="EMBL" id="CP000946">
    <property type="protein sequence ID" value="ACA77780.1"/>
    <property type="molecule type" value="Genomic_DNA"/>
</dbReference>
<dbReference type="RefSeq" id="WP_000558527.1">
    <property type="nucleotide sequence ID" value="NZ_MTFT01000006.1"/>
</dbReference>
<dbReference type="SMR" id="B1IRU2"/>
<dbReference type="GeneID" id="75057398"/>
<dbReference type="KEGG" id="ecl:EcolC_2140"/>
<dbReference type="HOGENOM" id="CLU_131496_3_0_6"/>
<dbReference type="GO" id="GO:0005829">
    <property type="term" value="C:cytosol"/>
    <property type="evidence" value="ECO:0007669"/>
    <property type="project" value="TreeGrafter"/>
</dbReference>
<dbReference type="GO" id="GO:0002952">
    <property type="term" value="F:(4S)-4-hydroxy-5-phosphonooxypentane-2,3-dione isomerase activity"/>
    <property type="evidence" value="ECO:0007669"/>
    <property type="project" value="UniProtKB-EC"/>
</dbReference>
<dbReference type="GO" id="GO:0016491">
    <property type="term" value="F:oxidoreductase activity"/>
    <property type="evidence" value="ECO:0007669"/>
    <property type="project" value="TreeGrafter"/>
</dbReference>
<dbReference type="FunFam" id="3.30.70.100:FF:000016">
    <property type="entry name" value="(4S)-4-hydroxy-5-phosphonooxypentane-2,3-dione isomerase"/>
    <property type="match status" value="1"/>
</dbReference>
<dbReference type="Gene3D" id="3.30.70.100">
    <property type="match status" value="1"/>
</dbReference>
<dbReference type="HAMAP" id="MF_02051">
    <property type="entry name" value="LsrG"/>
    <property type="match status" value="1"/>
</dbReference>
<dbReference type="InterPro" id="IPR007138">
    <property type="entry name" value="ABM_dom"/>
</dbReference>
<dbReference type="InterPro" id="IPR050744">
    <property type="entry name" value="AI-2_Isomerase_LsrG"/>
</dbReference>
<dbReference type="InterPro" id="IPR011008">
    <property type="entry name" value="Dimeric_a/b-barrel"/>
</dbReference>
<dbReference type="InterPro" id="IPR033672">
    <property type="entry name" value="LsrG"/>
</dbReference>
<dbReference type="NCBIfam" id="NF007791">
    <property type="entry name" value="PRK10486.1"/>
    <property type="match status" value="1"/>
</dbReference>
<dbReference type="PANTHER" id="PTHR33336:SF1">
    <property type="entry name" value="(4S)-4-HYDROXY-5-PHOSPHONOOXYPENTANE-2,3-DIONE ISOMERASE"/>
    <property type="match status" value="1"/>
</dbReference>
<dbReference type="PANTHER" id="PTHR33336">
    <property type="entry name" value="QUINOL MONOOXYGENASE YGIN-RELATED"/>
    <property type="match status" value="1"/>
</dbReference>
<dbReference type="Pfam" id="PF03992">
    <property type="entry name" value="ABM"/>
    <property type="match status" value="1"/>
</dbReference>
<dbReference type="SUPFAM" id="SSF54909">
    <property type="entry name" value="Dimeric alpha+beta barrel"/>
    <property type="match status" value="1"/>
</dbReference>
<dbReference type="PROSITE" id="PS51725">
    <property type="entry name" value="ABM"/>
    <property type="match status" value="1"/>
</dbReference>
<protein>
    <recommendedName>
        <fullName evidence="1">(4S)-4-hydroxy-5-phosphonooxypentane-2,3-dione isomerase</fullName>
        <ecNumber evidence="1">5.3.1.32</ecNumber>
    </recommendedName>
    <alternativeName>
        <fullName evidence="1">Autoinducer 2-degrading protein LsrG</fullName>
        <shortName evidence="1">AI-2-degrading protein LsrG</shortName>
    </alternativeName>
    <alternativeName>
        <fullName evidence="1">Phospho-(S)-4,5-dihydroxy-2,3-pentanedione isomerase</fullName>
    </alternativeName>
    <alternativeName>
        <fullName evidence="1">Phospho-AI-2 isomerase</fullName>
    </alternativeName>
</protein>
<proteinExistence type="inferred from homology"/>
<name>LSRG_ECOLC</name>